<accession>Q58DG6</accession>
<accession>A2VDQ1</accession>
<dbReference type="EMBL" id="BT021631">
    <property type="protein sequence ID" value="AAX46478.1"/>
    <property type="molecule type" value="mRNA"/>
</dbReference>
<dbReference type="EMBL" id="BC133345">
    <property type="protein sequence ID" value="AAI33346.1"/>
    <property type="molecule type" value="mRNA"/>
</dbReference>
<dbReference type="RefSeq" id="NP_001030268.1">
    <property type="nucleotide sequence ID" value="NM_001035096.1"/>
</dbReference>
<dbReference type="RefSeq" id="NP_001421944.1">
    <molecule id="Q58DG6-1"/>
    <property type="nucleotide sequence ID" value="NM_001435015.1"/>
</dbReference>
<dbReference type="RefSeq" id="XP_024835683.1">
    <molecule id="Q58DG6-2"/>
    <property type="nucleotide sequence ID" value="XM_024979915.2"/>
</dbReference>
<dbReference type="SMR" id="Q58DG6"/>
<dbReference type="FunCoup" id="Q58DG6">
    <property type="interactions" value="2871"/>
</dbReference>
<dbReference type="STRING" id="9913.ENSBTAP00000064090"/>
<dbReference type="PaxDb" id="9913-ENSBTAP00000011020"/>
<dbReference type="Ensembl" id="ENSBTAT00000011020.5">
    <molecule id="Q58DG6-1"/>
    <property type="protein sequence ID" value="ENSBTAP00000011020.4"/>
    <property type="gene ID" value="ENSBTAG00000008371.7"/>
</dbReference>
<dbReference type="Ensembl" id="ENSBTAT00000084210.1">
    <molecule id="Q58DG6-2"/>
    <property type="protein sequence ID" value="ENSBTAP00000069592.1"/>
    <property type="gene ID" value="ENSBTAG00000008371.7"/>
</dbReference>
<dbReference type="GeneID" id="511007"/>
<dbReference type="KEGG" id="bta:511007"/>
<dbReference type="CTD" id="84961"/>
<dbReference type="VEuPathDB" id="HostDB:ENSBTAG00000008371"/>
<dbReference type="eggNOG" id="KOG4341">
    <property type="taxonomic scope" value="Eukaryota"/>
</dbReference>
<dbReference type="GeneTree" id="ENSGT00940000153845"/>
<dbReference type="HOGENOM" id="CLU_016072_7_1_1"/>
<dbReference type="InParanoid" id="Q58DG6"/>
<dbReference type="OMA" id="LCNRIRY"/>
<dbReference type="OrthoDB" id="550575at2759"/>
<dbReference type="TreeFam" id="TF313434"/>
<dbReference type="Reactome" id="R-BTA-8951664">
    <property type="pathway name" value="Neddylation"/>
</dbReference>
<dbReference type="Reactome" id="R-BTA-983168">
    <property type="pathway name" value="Antigen processing: Ubiquitination &amp; Proteasome degradation"/>
</dbReference>
<dbReference type="Proteomes" id="UP000009136">
    <property type="component" value="Chromosome 19"/>
</dbReference>
<dbReference type="Bgee" id="ENSBTAG00000008371">
    <property type="expression patterns" value="Expressed in neutrophil and 110 other cell types or tissues"/>
</dbReference>
<dbReference type="GO" id="GO:0005737">
    <property type="term" value="C:cytoplasm"/>
    <property type="evidence" value="ECO:0007669"/>
    <property type="project" value="UniProtKB-SubCell"/>
</dbReference>
<dbReference type="GO" id="GO:0019005">
    <property type="term" value="C:SCF ubiquitin ligase complex"/>
    <property type="evidence" value="ECO:0000318"/>
    <property type="project" value="GO_Central"/>
</dbReference>
<dbReference type="GO" id="GO:0031146">
    <property type="term" value="P:SCF-dependent proteasomal ubiquitin-dependent protein catabolic process"/>
    <property type="evidence" value="ECO:0000318"/>
    <property type="project" value="GO_Central"/>
</dbReference>
<dbReference type="CDD" id="cd22115">
    <property type="entry name" value="F-box_FBXL2-like"/>
    <property type="match status" value="1"/>
</dbReference>
<dbReference type="FunFam" id="3.80.10.10:FF:000339">
    <property type="entry name" value="F-box/LRR-repeat protein 2 isoform X1"/>
    <property type="match status" value="1"/>
</dbReference>
<dbReference type="FunFam" id="3.80.10.10:FF:000578">
    <property type="entry name" value="F-box/LRR-repeat protein 2 isoform X1"/>
    <property type="match status" value="1"/>
</dbReference>
<dbReference type="FunFam" id="3.80.10.10:FF:000042">
    <property type="entry name" value="F-box/LRR-repeat protein 20 isoform 2"/>
    <property type="match status" value="1"/>
</dbReference>
<dbReference type="FunFam" id="1.20.1280.50:FF:000013">
    <property type="entry name" value="F-box/LRR-repeat protein 20 isoform X1"/>
    <property type="match status" value="1"/>
</dbReference>
<dbReference type="Gene3D" id="3.80.10.10">
    <property type="entry name" value="Ribonuclease Inhibitor"/>
    <property type="match status" value="2"/>
</dbReference>
<dbReference type="InterPro" id="IPR001810">
    <property type="entry name" value="F-box_dom"/>
</dbReference>
<dbReference type="InterPro" id="IPR001611">
    <property type="entry name" value="Leu-rich_rpt"/>
</dbReference>
<dbReference type="InterPro" id="IPR006553">
    <property type="entry name" value="Leu-rich_rpt_Cys-con_subtyp"/>
</dbReference>
<dbReference type="InterPro" id="IPR032675">
    <property type="entry name" value="LRR_dom_sf"/>
</dbReference>
<dbReference type="PANTHER" id="PTHR13318:SF95">
    <property type="entry name" value="F-BOX PROTEIN YLR352W"/>
    <property type="match status" value="1"/>
</dbReference>
<dbReference type="PANTHER" id="PTHR13318">
    <property type="entry name" value="PARTNER OF PAIRED, ISOFORM B-RELATED"/>
    <property type="match status" value="1"/>
</dbReference>
<dbReference type="Pfam" id="PF12937">
    <property type="entry name" value="F-box-like"/>
    <property type="match status" value="1"/>
</dbReference>
<dbReference type="Pfam" id="PF13516">
    <property type="entry name" value="LRR_6"/>
    <property type="match status" value="4"/>
</dbReference>
<dbReference type="SMART" id="SM00256">
    <property type="entry name" value="FBOX"/>
    <property type="match status" value="1"/>
</dbReference>
<dbReference type="SMART" id="SM00367">
    <property type="entry name" value="LRR_CC"/>
    <property type="match status" value="12"/>
</dbReference>
<dbReference type="SUPFAM" id="SSF52047">
    <property type="entry name" value="RNI-like"/>
    <property type="match status" value="1"/>
</dbReference>
<dbReference type="PROSITE" id="PS50181">
    <property type="entry name" value="FBOX"/>
    <property type="match status" value="1"/>
</dbReference>
<organism>
    <name type="scientific">Bos taurus</name>
    <name type="common">Bovine</name>
    <dbReference type="NCBI Taxonomy" id="9913"/>
    <lineage>
        <taxon>Eukaryota</taxon>
        <taxon>Metazoa</taxon>
        <taxon>Chordata</taxon>
        <taxon>Craniata</taxon>
        <taxon>Vertebrata</taxon>
        <taxon>Euteleostomi</taxon>
        <taxon>Mammalia</taxon>
        <taxon>Eutheria</taxon>
        <taxon>Laurasiatheria</taxon>
        <taxon>Artiodactyla</taxon>
        <taxon>Ruminantia</taxon>
        <taxon>Pecora</taxon>
        <taxon>Bovidae</taxon>
        <taxon>Bovinae</taxon>
        <taxon>Bos</taxon>
    </lineage>
</organism>
<sequence>MRRDVNGVTKSRFEMFSNSDEAVINKKLPKELLLRIFSFLDVVTLCRCAQVSRAWNVLALDGSNWQRIDLFDFQRDIEGRVVENISKRCGGFLRKLSLRGCLGVGDNALRTFAQNCRNIEVLNLNGCTKTTDATCTSLSKFCSKLRHLDLASCTSITNMSLKALSEGCPLLEQLNISWCDQVTKDGIQALVRGCGGLKALFLKGCTQLEDEALKYIGAHCPELVTLNLQTCLQITDEGLITICRGCHKLQSLCASGCSNITDAILNALGQNCPRLRILEVARCSQLTDVGFTTLARNCHELEKMDLEECVQITDSTLIQLSIHCPRLQVLSLSHCELITDDGIRHLGNGACAHDQLEVIELDNCPLITDASLEHLKSCHSLERIELYDCQQITRAGIKRLRTHLPNIKVHAYFAPVTPPPSVGGSRQRFCRCCIIL</sequence>
<comment type="function">
    <text evidence="1">Substrate-recognition component of the SCF (SKP1-CUL1-F-box protein)-type E3 ubiquitin ligase complex. Role in neural transmission (By similarity).</text>
</comment>
<comment type="subunit">
    <text evidence="1">Interacts with SKP1 and CUL1.</text>
</comment>
<comment type="subcellular location">
    <subcellularLocation>
        <location evidence="1">Cytoplasm</location>
    </subcellularLocation>
</comment>
<comment type="alternative products">
    <event type="alternative splicing"/>
    <isoform>
        <id>Q58DG6-1</id>
        <name>1</name>
        <sequence type="displayed"/>
    </isoform>
    <isoform>
        <id>Q58DG6-2</id>
        <name>2</name>
        <sequence type="described" ref="VSP_030768"/>
    </isoform>
</comment>
<reference key="1">
    <citation type="journal article" date="2005" name="BMC Genomics">
        <title>Characterization of 954 bovine full-CDS cDNA sequences.</title>
        <authorList>
            <person name="Harhay G.P."/>
            <person name="Sonstegard T.S."/>
            <person name="Keele J.W."/>
            <person name="Heaton M.P."/>
            <person name="Clawson M.L."/>
            <person name="Snelling W.M."/>
            <person name="Wiedmann R.T."/>
            <person name="Van Tassell C.P."/>
            <person name="Smith T.P.L."/>
        </authorList>
    </citation>
    <scope>NUCLEOTIDE SEQUENCE [LARGE SCALE MRNA] (ISOFORM 2)</scope>
</reference>
<reference key="2">
    <citation type="submission" date="2007-02" db="EMBL/GenBank/DDBJ databases">
        <authorList>
            <consortium name="NIH - Mammalian Gene Collection (MGC) project"/>
        </authorList>
    </citation>
    <scope>NUCLEOTIDE SEQUENCE [LARGE SCALE MRNA] (ISOFORM 1)</scope>
    <source>
        <strain>Hereford</strain>
        <tissue>Hypothalamus</tissue>
    </source>
</reference>
<gene>
    <name type="primary">FBXL20</name>
</gene>
<name>FXL20_BOVIN</name>
<keyword id="KW-0025">Alternative splicing</keyword>
<keyword id="KW-0963">Cytoplasm</keyword>
<keyword id="KW-0433">Leucine-rich repeat</keyword>
<keyword id="KW-0597">Phosphoprotein</keyword>
<keyword id="KW-1185">Reference proteome</keyword>
<keyword id="KW-0677">Repeat</keyword>
<keyword id="KW-0833">Ubl conjugation pathway</keyword>
<proteinExistence type="evidence at transcript level"/>
<protein>
    <recommendedName>
        <fullName>F-box/LRR-repeat protein 20</fullName>
    </recommendedName>
    <alternativeName>
        <fullName>F-box and leucine-rich repeat protein 20</fullName>
    </alternativeName>
</protein>
<feature type="chain" id="PRO_0000239140" description="F-box/LRR-repeat protein 20">
    <location>
        <begin position="1"/>
        <end position="436"/>
    </location>
</feature>
<feature type="domain" description="F-box" evidence="3">
    <location>
        <begin position="22"/>
        <end position="68"/>
    </location>
</feature>
<feature type="repeat" description="LRR 1">
    <location>
        <begin position="74"/>
        <end position="100"/>
    </location>
</feature>
<feature type="repeat" description="LRR 2">
    <location>
        <begin position="101"/>
        <end position="126"/>
    </location>
</feature>
<feature type="repeat" description="LRR 3">
    <location>
        <begin position="127"/>
        <end position="152"/>
    </location>
</feature>
<feature type="repeat" description="LRR 4">
    <location>
        <begin position="153"/>
        <end position="178"/>
    </location>
</feature>
<feature type="repeat" description="LRR 5">
    <location>
        <begin position="179"/>
        <end position="204"/>
    </location>
</feature>
<feature type="repeat" description="LRR 6">
    <location>
        <begin position="205"/>
        <end position="230"/>
    </location>
</feature>
<feature type="repeat" description="LRR 7">
    <location>
        <begin position="231"/>
        <end position="256"/>
    </location>
</feature>
<feature type="repeat" description="LRR 8">
    <location>
        <begin position="257"/>
        <end position="282"/>
    </location>
</feature>
<feature type="repeat" description="LRR 9">
    <location>
        <begin position="283"/>
        <end position="308"/>
    </location>
</feature>
<feature type="repeat" description="LRR 10">
    <location>
        <begin position="309"/>
        <end position="334"/>
    </location>
</feature>
<feature type="repeat" description="LRR 11">
    <location>
        <begin position="335"/>
        <end position="363"/>
    </location>
</feature>
<feature type="repeat" description="LRR 12">
    <location>
        <begin position="364"/>
        <end position="388"/>
    </location>
</feature>
<feature type="repeat" description="LRR 13">
    <location>
        <begin position="389"/>
        <end position="414"/>
    </location>
</feature>
<feature type="modified residue" description="Phosphothreonine" evidence="2">
    <location>
        <position position="417"/>
    </location>
</feature>
<feature type="modified residue" description="Phosphoserine" evidence="2">
    <location>
        <position position="421"/>
    </location>
</feature>
<feature type="splice variant" id="VSP_030768" description="In isoform 2." evidence="4">
    <original>MRRDVNGVTKSRFE</original>
    <variation>MAPSRDRLLHFGFKAT</variation>
    <location>
        <begin position="1"/>
        <end position="14"/>
    </location>
</feature>
<evidence type="ECO:0000250" key="1"/>
<evidence type="ECO:0000250" key="2">
    <source>
        <dbReference type="UniProtKB" id="Q96IG2"/>
    </source>
</evidence>
<evidence type="ECO:0000255" key="3">
    <source>
        <dbReference type="PROSITE-ProRule" id="PRU00080"/>
    </source>
</evidence>
<evidence type="ECO:0000303" key="4">
    <source>
    </source>
</evidence>